<feature type="chain" id="PRO_0000334043" description="Cell division protein SepF">
    <location>
        <begin position="1"/>
        <end position="214"/>
    </location>
</feature>
<feature type="region of interest" description="Disordered" evidence="2">
    <location>
        <begin position="25"/>
        <end position="51"/>
    </location>
</feature>
<comment type="function">
    <text evidence="1">Cell division protein that is part of the divisome complex and is recruited early to the Z-ring. Probably stimulates Z-ring formation, perhaps through the cross-linking of FtsZ protofilaments. Its function overlaps with FtsA.</text>
</comment>
<comment type="subunit">
    <text evidence="1">Homodimer. Interacts with FtsZ.</text>
</comment>
<comment type="subcellular location">
    <subcellularLocation>
        <location evidence="1">Cytoplasm</location>
    </subcellularLocation>
    <text evidence="1">Localizes to the division site, in a FtsZ-dependent manner.</text>
</comment>
<comment type="similarity">
    <text evidence="1">Belongs to the SepF family.</text>
</comment>
<gene>
    <name evidence="1" type="primary">sepF</name>
    <name type="ordered locus">MSMEG_4219</name>
    <name type="ordered locus">MSMEI_4121</name>
</gene>
<reference key="1">
    <citation type="submission" date="2006-10" db="EMBL/GenBank/DDBJ databases">
        <authorList>
            <person name="Fleischmann R.D."/>
            <person name="Dodson R.J."/>
            <person name="Haft D.H."/>
            <person name="Merkel J.S."/>
            <person name="Nelson W.C."/>
            <person name="Fraser C.M."/>
        </authorList>
    </citation>
    <scope>NUCLEOTIDE SEQUENCE [LARGE SCALE GENOMIC DNA]</scope>
    <source>
        <strain>ATCC 700084 / mc(2)155</strain>
    </source>
</reference>
<reference key="2">
    <citation type="journal article" date="2007" name="Genome Biol.">
        <title>Interrupted coding sequences in Mycobacterium smegmatis: authentic mutations or sequencing errors?</title>
        <authorList>
            <person name="Deshayes C."/>
            <person name="Perrodou E."/>
            <person name="Gallien S."/>
            <person name="Euphrasie D."/>
            <person name="Schaeffer C."/>
            <person name="Van-Dorsselaer A."/>
            <person name="Poch O."/>
            <person name="Lecompte O."/>
            <person name="Reyrat J.-M."/>
        </authorList>
    </citation>
    <scope>NUCLEOTIDE SEQUENCE [LARGE SCALE GENOMIC DNA]</scope>
    <source>
        <strain>ATCC 700084 / mc(2)155</strain>
    </source>
</reference>
<reference key="3">
    <citation type="journal article" date="2009" name="Genome Res.">
        <title>Ortho-proteogenomics: multiple proteomes investigation through orthology and a new MS-based protocol.</title>
        <authorList>
            <person name="Gallien S."/>
            <person name="Perrodou E."/>
            <person name="Carapito C."/>
            <person name="Deshayes C."/>
            <person name="Reyrat J.-M."/>
            <person name="Van Dorsselaer A."/>
            <person name="Poch O."/>
            <person name="Schaeffer C."/>
            <person name="Lecompte O."/>
        </authorList>
    </citation>
    <scope>NUCLEOTIDE SEQUENCE [LARGE SCALE GENOMIC DNA]</scope>
    <source>
        <strain>ATCC 700084 / mc(2)155</strain>
    </source>
</reference>
<sequence>MSTLHKVKAYFGMAPMDDYEDEYYEDDDRGARAGGYSRRPREDRFEEEAYGYEGHEYDEGPAYRGGYAERFADEPRFEGRMRAPREFDRPAPARLGAMRGSTRGALAMDPRGMAELFEAGSPLAKITTLRPKDYSEARTIGERFRDGTPVIMDLVSMDNADAKRLVDFAAGLAFALRGSFDKVATKVFLLSPADVDVTAEERRRIAEAGFYSYR</sequence>
<dbReference type="EMBL" id="CP000480">
    <property type="protein sequence ID" value="ABK71309.1"/>
    <property type="molecule type" value="Genomic_DNA"/>
</dbReference>
<dbReference type="EMBL" id="CP001663">
    <property type="protein sequence ID" value="AFP40578.1"/>
    <property type="molecule type" value="Genomic_DNA"/>
</dbReference>
<dbReference type="RefSeq" id="WP_003895610.1">
    <property type="nucleotide sequence ID" value="NZ_SIJM01000003.1"/>
</dbReference>
<dbReference type="RefSeq" id="YP_888496.1">
    <property type="nucleotide sequence ID" value="NC_008596.1"/>
</dbReference>
<dbReference type="SMR" id="A0R008"/>
<dbReference type="STRING" id="246196.MSMEG_4219"/>
<dbReference type="PaxDb" id="246196-MSMEI_4121"/>
<dbReference type="KEGG" id="msb:LJ00_20920"/>
<dbReference type="KEGG" id="msg:MSMEI_4121"/>
<dbReference type="KEGG" id="msm:MSMEG_4219"/>
<dbReference type="PATRIC" id="fig|246196.19.peg.4140"/>
<dbReference type="eggNOG" id="COG1799">
    <property type="taxonomic scope" value="Bacteria"/>
</dbReference>
<dbReference type="OrthoDB" id="3731101at2"/>
<dbReference type="Proteomes" id="UP000000757">
    <property type="component" value="Chromosome"/>
</dbReference>
<dbReference type="Proteomes" id="UP000006158">
    <property type="component" value="Chromosome"/>
</dbReference>
<dbReference type="GO" id="GO:0005737">
    <property type="term" value="C:cytoplasm"/>
    <property type="evidence" value="ECO:0007669"/>
    <property type="project" value="UniProtKB-SubCell"/>
</dbReference>
<dbReference type="GO" id="GO:0000917">
    <property type="term" value="P:division septum assembly"/>
    <property type="evidence" value="ECO:0007669"/>
    <property type="project" value="UniProtKB-KW"/>
</dbReference>
<dbReference type="GO" id="GO:0043093">
    <property type="term" value="P:FtsZ-dependent cytokinesis"/>
    <property type="evidence" value="ECO:0007669"/>
    <property type="project" value="UniProtKB-UniRule"/>
</dbReference>
<dbReference type="FunFam" id="3.30.110.150:FF:000001">
    <property type="entry name" value="Cell division protein SepF"/>
    <property type="match status" value="1"/>
</dbReference>
<dbReference type="Gene3D" id="3.30.110.150">
    <property type="entry name" value="SepF-like protein"/>
    <property type="match status" value="1"/>
</dbReference>
<dbReference type="HAMAP" id="MF_01197">
    <property type="entry name" value="SepF"/>
    <property type="match status" value="1"/>
</dbReference>
<dbReference type="InterPro" id="IPR023052">
    <property type="entry name" value="Cell_div_SepF"/>
</dbReference>
<dbReference type="InterPro" id="IPR007561">
    <property type="entry name" value="Cell_div_SepF/SepF-rel"/>
</dbReference>
<dbReference type="InterPro" id="IPR038594">
    <property type="entry name" value="SepF-like_sf"/>
</dbReference>
<dbReference type="PANTHER" id="PTHR35798">
    <property type="entry name" value="CELL DIVISION PROTEIN SEPF"/>
    <property type="match status" value="1"/>
</dbReference>
<dbReference type="PANTHER" id="PTHR35798:SF1">
    <property type="entry name" value="CELL DIVISION PROTEIN SEPF"/>
    <property type="match status" value="1"/>
</dbReference>
<dbReference type="Pfam" id="PF04472">
    <property type="entry name" value="SepF"/>
    <property type="match status" value="1"/>
</dbReference>
<evidence type="ECO:0000255" key="1">
    <source>
        <dbReference type="HAMAP-Rule" id="MF_01197"/>
    </source>
</evidence>
<evidence type="ECO:0000256" key="2">
    <source>
        <dbReference type="SAM" id="MobiDB-lite"/>
    </source>
</evidence>
<proteinExistence type="inferred from homology"/>
<keyword id="KW-0131">Cell cycle</keyword>
<keyword id="KW-0132">Cell division</keyword>
<keyword id="KW-0963">Cytoplasm</keyword>
<keyword id="KW-1185">Reference proteome</keyword>
<keyword id="KW-0717">Septation</keyword>
<accession>A0R008</accession>
<accession>I7FPD7</accession>
<organism>
    <name type="scientific">Mycolicibacterium smegmatis (strain ATCC 700084 / mc(2)155)</name>
    <name type="common">Mycobacterium smegmatis</name>
    <dbReference type="NCBI Taxonomy" id="246196"/>
    <lineage>
        <taxon>Bacteria</taxon>
        <taxon>Bacillati</taxon>
        <taxon>Actinomycetota</taxon>
        <taxon>Actinomycetes</taxon>
        <taxon>Mycobacteriales</taxon>
        <taxon>Mycobacteriaceae</taxon>
        <taxon>Mycolicibacterium</taxon>
    </lineage>
</organism>
<name>SEPF_MYCS2</name>
<protein>
    <recommendedName>
        <fullName evidence="1">Cell division protein SepF</fullName>
    </recommendedName>
</protein>